<keyword id="KW-0223">Dioxygenase</keyword>
<keyword id="KW-0479">Metal-binding</keyword>
<keyword id="KW-0560">Oxidoreductase</keyword>
<keyword id="KW-1185">Reference proteome</keyword>
<proteinExistence type="inferred from homology"/>
<name>Y133_THEAC</name>
<sequence>MFGSDNRADYDNGFPWHPHRGIETITYQIKGKTFHEDSEGHRGIIAPGEIQWMTAGSGIFHEEMPKPIYYGEENKYRERNDSNAGIQLWLNMPASSKMADPAYRSIRSDQIPQISDDYGNRIRIVAGTVNRVSGALNENFQYDLMQRIDPYYVEILMEPDTRTSLSVPEGHRAIMAIVEGSIRVNGSTFNEKNVAVLSKEGTDIFIDSQANSRLIFLAGKPLNEPIAWYGPIVMNTRDQLIQAFNELQEGKFVKNRNPVWQ</sequence>
<dbReference type="EC" id="1.13.11.24"/>
<dbReference type="EMBL" id="AL445063">
    <property type="protein sequence ID" value="CAC11280.1"/>
    <property type="molecule type" value="Genomic_DNA"/>
</dbReference>
<dbReference type="SMR" id="Q9HLU2"/>
<dbReference type="STRING" id="273075.gene:9571347"/>
<dbReference type="PaxDb" id="273075-Ta0133m"/>
<dbReference type="EnsemblBacteria" id="CAC11280">
    <property type="protein sequence ID" value="CAC11280"/>
    <property type="gene ID" value="CAC11280"/>
</dbReference>
<dbReference type="KEGG" id="tac:Ta0133"/>
<dbReference type="eggNOG" id="arCOG02935">
    <property type="taxonomic scope" value="Archaea"/>
</dbReference>
<dbReference type="HOGENOM" id="CLU_045717_5_0_2"/>
<dbReference type="InParanoid" id="Q9HLU2"/>
<dbReference type="UniPathway" id="UPA00724"/>
<dbReference type="Proteomes" id="UP000001024">
    <property type="component" value="Chromosome"/>
</dbReference>
<dbReference type="GO" id="GO:0046872">
    <property type="term" value="F:metal ion binding"/>
    <property type="evidence" value="ECO:0007669"/>
    <property type="project" value="UniProtKB-KW"/>
</dbReference>
<dbReference type="GO" id="GO:0008127">
    <property type="term" value="F:quercetin 2,3-dioxygenase activity"/>
    <property type="evidence" value="ECO:0007669"/>
    <property type="project" value="UniProtKB-EC"/>
</dbReference>
<dbReference type="CDD" id="cd02247">
    <property type="entry name" value="cupin_pirin_C"/>
    <property type="match status" value="1"/>
</dbReference>
<dbReference type="CDD" id="cd02909">
    <property type="entry name" value="cupin_pirin_N"/>
    <property type="match status" value="1"/>
</dbReference>
<dbReference type="Gene3D" id="2.60.120.10">
    <property type="entry name" value="Jelly Rolls"/>
    <property type="match status" value="2"/>
</dbReference>
<dbReference type="InterPro" id="IPR012093">
    <property type="entry name" value="Pirin"/>
</dbReference>
<dbReference type="InterPro" id="IPR008778">
    <property type="entry name" value="Pirin_C_dom"/>
</dbReference>
<dbReference type="InterPro" id="IPR003829">
    <property type="entry name" value="Pirin_N_dom"/>
</dbReference>
<dbReference type="InterPro" id="IPR014710">
    <property type="entry name" value="RmlC-like_jellyroll"/>
</dbReference>
<dbReference type="InterPro" id="IPR011051">
    <property type="entry name" value="RmlC_Cupin_sf"/>
</dbReference>
<dbReference type="PANTHER" id="PTHR13903:SF8">
    <property type="entry name" value="PIRIN"/>
    <property type="match status" value="1"/>
</dbReference>
<dbReference type="PANTHER" id="PTHR13903">
    <property type="entry name" value="PIRIN-RELATED"/>
    <property type="match status" value="1"/>
</dbReference>
<dbReference type="Pfam" id="PF02678">
    <property type="entry name" value="Pirin"/>
    <property type="match status" value="1"/>
</dbReference>
<dbReference type="Pfam" id="PF05726">
    <property type="entry name" value="Pirin_C"/>
    <property type="match status" value="1"/>
</dbReference>
<dbReference type="PIRSF" id="PIRSF006232">
    <property type="entry name" value="Pirin"/>
    <property type="match status" value="1"/>
</dbReference>
<dbReference type="SUPFAM" id="SSF51182">
    <property type="entry name" value="RmlC-like cupins"/>
    <property type="match status" value="1"/>
</dbReference>
<protein>
    <recommendedName>
        <fullName>Putative quercetin 2,3-dioxygenase Ta0133</fullName>
        <shortName>Putative quercetinase</shortName>
        <ecNumber>1.13.11.24</ecNumber>
    </recommendedName>
    <alternativeName>
        <fullName>Pirin-like protein Ta0133</fullName>
    </alternativeName>
</protein>
<evidence type="ECO:0000250" key="1"/>
<evidence type="ECO:0000305" key="2"/>
<feature type="chain" id="PRO_0000214075" description="Putative quercetin 2,3-dioxygenase Ta0133">
    <location>
        <begin position="1"/>
        <end position="261"/>
    </location>
</feature>
<feature type="binding site" evidence="1">
    <location>
        <position position="17"/>
    </location>
    <ligand>
        <name>a divalent metal cation</name>
        <dbReference type="ChEBI" id="CHEBI:60240"/>
    </ligand>
</feature>
<feature type="binding site" evidence="1">
    <location>
        <position position="19"/>
    </location>
    <ligand>
        <name>a divalent metal cation</name>
        <dbReference type="ChEBI" id="CHEBI:60240"/>
    </ligand>
</feature>
<feature type="binding site" evidence="1">
    <location>
        <position position="61"/>
    </location>
    <ligand>
        <name>a divalent metal cation</name>
        <dbReference type="ChEBI" id="CHEBI:60240"/>
    </ligand>
</feature>
<feature type="binding site" evidence="1">
    <location>
        <position position="63"/>
    </location>
    <ligand>
        <name>a divalent metal cation</name>
        <dbReference type="ChEBI" id="CHEBI:60240"/>
    </ligand>
</feature>
<accession>Q9HLU2</accession>
<reference key="1">
    <citation type="journal article" date="2000" name="Nature">
        <title>The genome sequence of the thermoacidophilic scavenger Thermoplasma acidophilum.</title>
        <authorList>
            <person name="Ruepp A."/>
            <person name="Graml W."/>
            <person name="Santos-Martinez M.-L."/>
            <person name="Koretke K.K."/>
            <person name="Volker C."/>
            <person name="Mewes H.-W."/>
            <person name="Frishman D."/>
            <person name="Stocker S."/>
            <person name="Lupas A.N."/>
            <person name="Baumeister W."/>
        </authorList>
    </citation>
    <scope>NUCLEOTIDE SEQUENCE [LARGE SCALE GENOMIC DNA]</scope>
    <source>
        <strain>ATCC 25905 / DSM 1728 / JCM 9062 / NBRC 15155 / AMRC-C165</strain>
    </source>
</reference>
<organism>
    <name type="scientific">Thermoplasma acidophilum (strain ATCC 25905 / DSM 1728 / JCM 9062 / NBRC 15155 / AMRC-C165)</name>
    <dbReference type="NCBI Taxonomy" id="273075"/>
    <lineage>
        <taxon>Archaea</taxon>
        <taxon>Methanobacteriati</taxon>
        <taxon>Thermoplasmatota</taxon>
        <taxon>Thermoplasmata</taxon>
        <taxon>Thermoplasmatales</taxon>
        <taxon>Thermoplasmataceae</taxon>
        <taxon>Thermoplasma</taxon>
    </lineage>
</organism>
<comment type="function">
    <text evidence="1">Putative quercetin 2,3-dioxygenase.</text>
</comment>
<comment type="catalytic activity">
    <reaction>
        <text>quercetin + O2 = 2-(3,4-dihydroxybenzoyloxy)-4,6-dihydroxybenzoate + CO</text>
        <dbReference type="Rhea" id="RHEA:15381"/>
        <dbReference type="ChEBI" id="CHEBI:15379"/>
        <dbReference type="ChEBI" id="CHEBI:17245"/>
        <dbReference type="ChEBI" id="CHEBI:57628"/>
        <dbReference type="ChEBI" id="CHEBI:57694"/>
        <dbReference type="EC" id="1.13.11.24"/>
    </reaction>
</comment>
<comment type="cofactor">
    <cofactor evidence="1">
        <name>a divalent metal cation</name>
        <dbReference type="ChEBI" id="CHEBI:60240"/>
    </cofactor>
    <text evidence="1">Binds 1 divalent metal cation.</text>
</comment>
<comment type="pathway">
    <text>Flavonoid metabolism; quercetin degradation.</text>
</comment>
<comment type="similarity">
    <text evidence="2">Belongs to the pirin family.</text>
</comment>
<gene>
    <name type="ordered locus">Ta0133</name>
</gene>